<dbReference type="EMBL" id="AE006468">
    <property type="protein sequence ID" value="AAL21237.1"/>
    <property type="molecule type" value="Genomic_DNA"/>
</dbReference>
<dbReference type="RefSeq" id="NP_461278.1">
    <property type="nucleotide sequence ID" value="NC_003197.2"/>
</dbReference>
<dbReference type="RefSeq" id="WP_000106617.1">
    <property type="nucleotide sequence ID" value="NC_003197.2"/>
</dbReference>
<dbReference type="STRING" id="99287.STM2336"/>
<dbReference type="PaxDb" id="99287-STM2336"/>
<dbReference type="GeneID" id="1253858"/>
<dbReference type="KEGG" id="stm:STM2336"/>
<dbReference type="PATRIC" id="fig|99287.12.peg.2473"/>
<dbReference type="HOGENOM" id="CLU_128746_0_0_6"/>
<dbReference type="OMA" id="IMPPVAV"/>
<dbReference type="PhylomeDB" id="Q8ZND7"/>
<dbReference type="BioCyc" id="SENT99287:STM2336-MONOMER"/>
<dbReference type="Proteomes" id="UP000001014">
    <property type="component" value="Chromosome"/>
</dbReference>
<dbReference type="GO" id="GO:0005886">
    <property type="term" value="C:plasma membrane"/>
    <property type="evidence" value="ECO:0007669"/>
    <property type="project" value="UniProtKB-SubCell"/>
</dbReference>
<dbReference type="HAMAP" id="MF_01101">
    <property type="entry name" value="UPF0208"/>
    <property type="match status" value="1"/>
</dbReference>
<dbReference type="InterPro" id="IPR007334">
    <property type="entry name" value="UPF0208"/>
</dbReference>
<dbReference type="NCBIfam" id="NF002493">
    <property type="entry name" value="PRK01816.1"/>
    <property type="match status" value="1"/>
</dbReference>
<dbReference type="Pfam" id="PF04217">
    <property type="entry name" value="DUF412"/>
    <property type="match status" value="1"/>
</dbReference>
<protein>
    <recommendedName>
        <fullName>UPF0208 membrane protein YfbV</fullName>
    </recommendedName>
</protein>
<name>YFBV_SALTY</name>
<feature type="chain" id="PRO_0000080821" description="UPF0208 membrane protein YfbV">
    <location>
        <begin position="1"/>
        <end position="151"/>
    </location>
</feature>
<feature type="topological domain" description="Cytoplasmic" evidence="2">
    <location>
        <begin position="1"/>
        <end position="45"/>
    </location>
</feature>
<feature type="transmembrane region" description="Helical" evidence="2">
    <location>
        <begin position="46"/>
        <end position="65"/>
    </location>
</feature>
<feature type="topological domain" description="Periplasmic" evidence="2">
    <location>
        <begin position="66"/>
        <end position="68"/>
    </location>
</feature>
<feature type="transmembrane region" description="Helical" evidence="2">
    <location>
        <begin position="69"/>
        <end position="91"/>
    </location>
</feature>
<feature type="topological domain" description="Cytoplasmic" evidence="2">
    <location>
        <begin position="92"/>
        <end position="151"/>
    </location>
</feature>
<gene>
    <name type="primary">yfbV</name>
    <name type="ordered locus">STM2336</name>
</gene>
<evidence type="ECO:0000250" key="1"/>
<evidence type="ECO:0000255" key="2"/>
<evidence type="ECO:0000305" key="3"/>
<organism>
    <name type="scientific">Salmonella typhimurium (strain LT2 / SGSC1412 / ATCC 700720)</name>
    <dbReference type="NCBI Taxonomy" id="99287"/>
    <lineage>
        <taxon>Bacteria</taxon>
        <taxon>Pseudomonadati</taxon>
        <taxon>Pseudomonadota</taxon>
        <taxon>Gammaproteobacteria</taxon>
        <taxon>Enterobacterales</taxon>
        <taxon>Enterobacteriaceae</taxon>
        <taxon>Salmonella</taxon>
    </lineage>
</organism>
<sequence>MSTPDNRSVNFFSLFRRGQHYAKTWPMEKRLAPVFVENRVIRMTRYAIRFMPPVAVFTLCWQIALGGQLGPAVATALFALSLPMQGLWWLGKRSVTPLPPSILNWFYEVRGKLQEAGQALAPVEGKPDYQALADTLKRAFKQLDKTFLDDL</sequence>
<comment type="subcellular location">
    <subcellularLocation>
        <location evidence="1">Cell inner membrane</location>
        <topology evidence="1">Multi-pass membrane protein</topology>
    </subcellularLocation>
</comment>
<comment type="similarity">
    <text evidence="3">Belongs to the UPF0208 family.</text>
</comment>
<proteinExistence type="inferred from homology"/>
<reference key="1">
    <citation type="journal article" date="2001" name="Nature">
        <title>Complete genome sequence of Salmonella enterica serovar Typhimurium LT2.</title>
        <authorList>
            <person name="McClelland M."/>
            <person name="Sanderson K.E."/>
            <person name="Spieth J."/>
            <person name="Clifton S.W."/>
            <person name="Latreille P."/>
            <person name="Courtney L."/>
            <person name="Porwollik S."/>
            <person name="Ali J."/>
            <person name="Dante M."/>
            <person name="Du F."/>
            <person name="Hou S."/>
            <person name="Layman D."/>
            <person name="Leonard S."/>
            <person name="Nguyen C."/>
            <person name="Scott K."/>
            <person name="Holmes A."/>
            <person name="Grewal N."/>
            <person name="Mulvaney E."/>
            <person name="Ryan E."/>
            <person name="Sun H."/>
            <person name="Florea L."/>
            <person name="Miller W."/>
            <person name="Stoneking T."/>
            <person name="Nhan M."/>
            <person name="Waterston R."/>
            <person name="Wilson R.K."/>
        </authorList>
    </citation>
    <scope>NUCLEOTIDE SEQUENCE [LARGE SCALE GENOMIC DNA]</scope>
    <source>
        <strain>LT2 / SGSC1412 / ATCC 700720</strain>
    </source>
</reference>
<accession>Q8ZND7</accession>
<keyword id="KW-0997">Cell inner membrane</keyword>
<keyword id="KW-1003">Cell membrane</keyword>
<keyword id="KW-0472">Membrane</keyword>
<keyword id="KW-1185">Reference proteome</keyword>
<keyword id="KW-0812">Transmembrane</keyword>
<keyword id="KW-1133">Transmembrane helix</keyword>